<organism>
    <name type="scientific">Macaca fascicularis</name>
    <name type="common">Crab-eating macaque</name>
    <name type="synonym">Cynomolgus monkey</name>
    <dbReference type="NCBI Taxonomy" id="9541"/>
    <lineage>
        <taxon>Eukaryota</taxon>
        <taxon>Metazoa</taxon>
        <taxon>Chordata</taxon>
        <taxon>Craniata</taxon>
        <taxon>Vertebrata</taxon>
        <taxon>Euteleostomi</taxon>
        <taxon>Mammalia</taxon>
        <taxon>Eutheria</taxon>
        <taxon>Euarchontoglires</taxon>
        <taxon>Primates</taxon>
        <taxon>Haplorrhini</taxon>
        <taxon>Catarrhini</taxon>
        <taxon>Cercopithecidae</taxon>
        <taxon>Cercopithecinae</taxon>
        <taxon>Macaca</taxon>
    </lineage>
</organism>
<keyword id="KW-0963">Cytoplasm</keyword>
<keyword id="KW-0221">Differentiation</keyword>
<keyword id="KW-0469">Meiosis</keyword>
<keyword id="KW-0896">Oogenesis</keyword>
<keyword id="KW-1185">Reference proteome</keyword>
<keyword id="KW-0677">Repeat</keyword>
<keyword id="KW-0694">RNA-binding</keyword>
<keyword id="KW-0744">Spermatogenesis</keyword>
<gene>
    <name type="primary">RBM46</name>
    <name type="ORF">QtsA-21007</name>
</gene>
<comment type="function">
    <text evidence="1">Essential for male and female fertility, playing a crucial role in regulating germ cell development by ensuring the proper progression of meiosis prophase I (By similarity). Regulates mitotic-to-meiotic transition in spermatogenesis by forming a complex with MEIOC and YTHDC2 which recognizes and down-regulates mitotic transcripts for a successful meiotic entry (By similarity). Required for normal synaptonemal complex formation during meiosis, binding meiotic cohesin subunit mRNAs containing GCCUAU/GUUCGA motifs in their 3'UTRs regions and positively regulating their translation (By similarity). Required for spermatogonial differentiation in both developing and adult testis (By similarity).</text>
</comment>
<comment type="subunit">
    <text evidence="1">Interacts with YTHDC2, MEIOC, MOV10, CNOT6L, DDX4, UPF1 and PABPC1.</text>
</comment>
<comment type="subcellular location">
    <subcellularLocation>
        <location evidence="1">Cytoplasm</location>
    </subcellularLocation>
</comment>
<comment type="sequence caution" evidence="3">
    <conflict type="frameshift">
        <sequence resource="EMBL-CDS" id="BAE02529"/>
    </conflict>
</comment>
<feature type="chain" id="PRO_0000305316" description="Probable RNA-binding protein 46">
    <location>
        <begin position="1"/>
        <end position="485"/>
    </location>
</feature>
<feature type="domain" description="RRM 1" evidence="2">
    <location>
        <begin position="61"/>
        <end position="139"/>
    </location>
</feature>
<feature type="domain" description="RRM 2" evidence="2">
    <location>
        <begin position="141"/>
        <end position="223"/>
    </location>
</feature>
<feature type="domain" description="RRM 3" evidence="2">
    <location>
        <begin position="236"/>
        <end position="308"/>
    </location>
</feature>
<name>RBM46_MACFA</name>
<accession>Q4R2Z0</accession>
<proteinExistence type="evidence at transcript level"/>
<evidence type="ECO:0000250" key="1">
    <source>
        <dbReference type="UniProtKB" id="P86049"/>
    </source>
</evidence>
<evidence type="ECO:0000255" key="2">
    <source>
        <dbReference type="PROSITE-ProRule" id="PRU00176"/>
    </source>
</evidence>
<evidence type="ECO:0000305" key="3"/>
<dbReference type="EMBL" id="AB179478">
    <property type="protein sequence ID" value="BAE02529.1"/>
    <property type="status" value="ALT_FRAME"/>
    <property type="molecule type" value="mRNA"/>
</dbReference>
<dbReference type="SMR" id="Q4R2Z0"/>
<dbReference type="STRING" id="9541.ENSMFAP00000023704"/>
<dbReference type="eggNOG" id="KOG0117">
    <property type="taxonomic scope" value="Eukaryota"/>
</dbReference>
<dbReference type="Proteomes" id="UP000233100">
    <property type="component" value="Unplaced"/>
</dbReference>
<dbReference type="GO" id="GO:0005737">
    <property type="term" value="C:cytoplasm"/>
    <property type="evidence" value="ECO:0000250"/>
    <property type="project" value="UniProtKB"/>
</dbReference>
<dbReference type="GO" id="GO:0003723">
    <property type="term" value="F:RNA binding"/>
    <property type="evidence" value="ECO:0007669"/>
    <property type="project" value="UniProtKB-KW"/>
</dbReference>
<dbReference type="GO" id="GO:0051728">
    <property type="term" value="P:cell cycle switching, mitotic to meiotic cell cycle"/>
    <property type="evidence" value="ECO:0000250"/>
    <property type="project" value="UniProtKB"/>
</dbReference>
<dbReference type="GO" id="GO:0007143">
    <property type="term" value="P:female meiotic nuclear division"/>
    <property type="evidence" value="ECO:0000250"/>
    <property type="project" value="UniProtKB"/>
</dbReference>
<dbReference type="GO" id="GO:0007140">
    <property type="term" value="P:male meiotic nuclear division"/>
    <property type="evidence" value="ECO:0000250"/>
    <property type="project" value="UniProtKB"/>
</dbReference>
<dbReference type="GO" id="GO:0048477">
    <property type="term" value="P:oogenesis"/>
    <property type="evidence" value="ECO:0000250"/>
    <property type="project" value="UniProtKB"/>
</dbReference>
<dbReference type="GO" id="GO:0048515">
    <property type="term" value="P:spermatid differentiation"/>
    <property type="evidence" value="ECO:0000250"/>
    <property type="project" value="UniProtKB"/>
</dbReference>
<dbReference type="GO" id="GO:0007283">
    <property type="term" value="P:spermatogenesis"/>
    <property type="evidence" value="ECO:0000250"/>
    <property type="project" value="UniProtKB"/>
</dbReference>
<dbReference type="CDD" id="cd19901">
    <property type="entry name" value="DSRM_RBM46"/>
    <property type="match status" value="1"/>
</dbReference>
<dbReference type="CDD" id="cd12484">
    <property type="entry name" value="RRM1_RBM46"/>
    <property type="match status" value="1"/>
</dbReference>
<dbReference type="CDD" id="cd12492">
    <property type="entry name" value="RRM2_RBM46"/>
    <property type="match status" value="1"/>
</dbReference>
<dbReference type="CDD" id="cd12496">
    <property type="entry name" value="RRM3_RBM46"/>
    <property type="match status" value="1"/>
</dbReference>
<dbReference type="FunFam" id="3.30.70.330:FF:000022">
    <property type="entry name" value="APOBEC1 complementation factor isoform X1"/>
    <property type="match status" value="1"/>
</dbReference>
<dbReference type="FunFam" id="3.30.70.330:FF:000026">
    <property type="entry name" value="APOBEC1 complementation factor isoform X1"/>
    <property type="match status" value="1"/>
</dbReference>
<dbReference type="FunFam" id="3.30.70.330:FF:000168">
    <property type="entry name" value="RNA binding motif protein 46"/>
    <property type="match status" value="1"/>
</dbReference>
<dbReference type="Gene3D" id="3.30.70.330">
    <property type="match status" value="3"/>
</dbReference>
<dbReference type="InterPro" id="IPR006535">
    <property type="entry name" value="HnRNP_R/Q_splicing_fac"/>
</dbReference>
<dbReference type="InterPro" id="IPR012677">
    <property type="entry name" value="Nucleotide-bd_a/b_plait_sf"/>
</dbReference>
<dbReference type="InterPro" id="IPR035979">
    <property type="entry name" value="RBD_domain_sf"/>
</dbReference>
<dbReference type="InterPro" id="IPR044462">
    <property type="entry name" value="RBM46_DSR"/>
</dbReference>
<dbReference type="InterPro" id="IPR034434">
    <property type="entry name" value="RBM46_RRM1"/>
</dbReference>
<dbReference type="InterPro" id="IPR034435">
    <property type="entry name" value="RBM46_RRM2"/>
</dbReference>
<dbReference type="InterPro" id="IPR047837">
    <property type="entry name" value="RBM46_RRM3"/>
</dbReference>
<dbReference type="InterPro" id="IPR000504">
    <property type="entry name" value="RRM_dom"/>
</dbReference>
<dbReference type="NCBIfam" id="TIGR01648">
    <property type="entry name" value="hnRNP-R-Q"/>
    <property type="match status" value="1"/>
</dbReference>
<dbReference type="PANTHER" id="PTHR21245">
    <property type="entry name" value="HETEROGENEOUS NUCLEAR RIBONUCLEOPROTEIN"/>
    <property type="match status" value="1"/>
</dbReference>
<dbReference type="Pfam" id="PF14709">
    <property type="entry name" value="DND1_DSRM"/>
    <property type="match status" value="1"/>
</dbReference>
<dbReference type="Pfam" id="PF00076">
    <property type="entry name" value="RRM_1"/>
    <property type="match status" value="3"/>
</dbReference>
<dbReference type="SMART" id="SM00360">
    <property type="entry name" value="RRM"/>
    <property type="match status" value="3"/>
</dbReference>
<dbReference type="SUPFAM" id="SSF54928">
    <property type="entry name" value="RNA-binding domain, RBD"/>
    <property type="match status" value="2"/>
</dbReference>
<dbReference type="PROSITE" id="PS50102">
    <property type="entry name" value="RRM"/>
    <property type="match status" value="3"/>
</dbReference>
<reference key="1">
    <citation type="submission" date="2005-06" db="EMBL/GenBank/DDBJ databases">
        <title>DNA sequences of macaque genes expressed in brain or testis and its evolutionary implications.</title>
        <authorList>
            <consortium name="International consortium for macaque cDNA sequencing and analysis"/>
        </authorList>
    </citation>
    <scope>NUCLEOTIDE SEQUENCE [LARGE SCALE MRNA]</scope>
    <source>
        <tissue>Testis</tissue>
    </source>
</reference>
<sequence>MNEENIDGTNGCSKVRTGTQNEAALLALMEKTGYNMVQENGQRKFGGPPPGWEGPPPPRGCEVFVGKIPRDMYEDELVPVFERAGKIYEFRLMMEFSGENRGYAFVMYTTKEEAQLAIRILNNYEIRPGKFIGVCVSLDNCRLFIGAIPKEKKKEEILDEMKKVTEGVVDVIVYPSATDKTKNRGFAFVEYESHRAAAMARRKLIPGTFQLWGHTIQVDWADPEKEVDEETMQRVKVLYVRNLMISTTEETIKAEFNKFKPGAVERVKKLRDYAFVHFFNREDAVAAMSVMNGKCIDGASIEVTLAKPVNKENTWRQHLNGQISPNSENLIVFANKEESHPKTLGKLPTLPARLNGQHSPSPPEVERCTYPFYPGTKLTPISMYSLKSNHFNSAVMHLDYYCNKNNWAPPEYYLYSTTSQDGKVLLVYKIVIPAIANGSQSYFMPDKLCTTLEDAKELAAQFTLLHLDRERNLFSLDLCRRIWRK</sequence>
<protein>
    <recommendedName>
        <fullName>Probable RNA-binding protein 46</fullName>
    </recommendedName>
    <alternativeName>
        <fullName>RNA-binding motif protein 46</fullName>
    </alternativeName>
</protein>